<keyword id="KW-0963">Cytoplasm</keyword>
<keyword id="KW-0448">Lipopolysaccharide biosynthesis</keyword>
<keyword id="KW-0548">Nucleotidyltransferase</keyword>
<keyword id="KW-0808">Transferase</keyword>
<protein>
    <recommendedName>
        <fullName evidence="1">3-deoxy-manno-octulosonate cytidylyltransferase</fullName>
        <ecNumber evidence="1">2.7.7.38</ecNumber>
    </recommendedName>
    <alternativeName>
        <fullName evidence="1">CMP-2-keto-3-deoxyoctulosonic acid synthase</fullName>
        <shortName evidence="1">CKS</shortName>
        <shortName evidence="1">CMP-KDO synthase</shortName>
    </alternativeName>
</protein>
<evidence type="ECO:0000255" key="1">
    <source>
        <dbReference type="HAMAP-Rule" id="MF_00057"/>
    </source>
</evidence>
<feature type="chain" id="PRO_0000369999" description="3-deoxy-manno-octulosonate cytidylyltransferase">
    <location>
        <begin position="1"/>
        <end position="252"/>
    </location>
</feature>
<organism>
    <name type="scientific">Phocaeicola vulgatus (strain ATCC 8482 / DSM 1447 / JCM 5826 / CCUG 4940 / NBRC 14291 / NCTC 11154)</name>
    <name type="common">Bacteroides vulgatus</name>
    <dbReference type="NCBI Taxonomy" id="435590"/>
    <lineage>
        <taxon>Bacteria</taxon>
        <taxon>Pseudomonadati</taxon>
        <taxon>Bacteroidota</taxon>
        <taxon>Bacteroidia</taxon>
        <taxon>Bacteroidales</taxon>
        <taxon>Bacteroidaceae</taxon>
        <taxon>Phocaeicola</taxon>
    </lineage>
</organism>
<reference key="1">
    <citation type="journal article" date="2007" name="PLoS Biol.">
        <title>Evolution of symbiotic bacteria in the distal human intestine.</title>
        <authorList>
            <person name="Xu J."/>
            <person name="Mahowald M.A."/>
            <person name="Ley R.E."/>
            <person name="Lozupone C.A."/>
            <person name="Hamady M."/>
            <person name="Martens E.C."/>
            <person name="Henrissat B."/>
            <person name="Coutinho P.M."/>
            <person name="Minx P."/>
            <person name="Latreille P."/>
            <person name="Cordum H."/>
            <person name="Van Brunt A."/>
            <person name="Kim K."/>
            <person name="Fulton R.S."/>
            <person name="Fulton L.A."/>
            <person name="Clifton S.W."/>
            <person name="Wilson R.K."/>
            <person name="Knight R.D."/>
            <person name="Gordon J.I."/>
        </authorList>
    </citation>
    <scope>NUCLEOTIDE SEQUENCE [LARGE SCALE GENOMIC DNA]</scope>
    <source>
        <strain>ATCC 8482 / DSM 1447 / JCM 5826 / CCUG 4940 / NBRC 14291 / NCTC 11154</strain>
    </source>
</reference>
<gene>
    <name evidence="1" type="primary">kdsB</name>
    <name type="ordered locus">BVU_3328</name>
</gene>
<comment type="function">
    <text evidence="1">Activates KDO (a required 8-carbon sugar) for incorporation into bacterial lipopolysaccharide in Gram-negative bacteria.</text>
</comment>
<comment type="catalytic activity">
    <reaction evidence="1">
        <text>3-deoxy-alpha-D-manno-oct-2-ulosonate + CTP = CMP-3-deoxy-beta-D-manno-octulosonate + diphosphate</text>
        <dbReference type="Rhea" id="RHEA:23448"/>
        <dbReference type="ChEBI" id="CHEBI:33019"/>
        <dbReference type="ChEBI" id="CHEBI:37563"/>
        <dbReference type="ChEBI" id="CHEBI:85986"/>
        <dbReference type="ChEBI" id="CHEBI:85987"/>
        <dbReference type="EC" id="2.7.7.38"/>
    </reaction>
</comment>
<comment type="pathway">
    <text evidence="1">Nucleotide-sugar biosynthesis; CMP-3-deoxy-D-manno-octulosonate biosynthesis; CMP-3-deoxy-D-manno-octulosonate from 3-deoxy-D-manno-octulosonate and CTP: step 1/1.</text>
</comment>
<comment type="pathway">
    <text evidence="1">Bacterial outer membrane biogenesis; lipopolysaccharide biosynthesis.</text>
</comment>
<comment type="subcellular location">
    <subcellularLocation>
        <location evidence="1">Cytoplasm</location>
    </subcellularLocation>
</comment>
<comment type="similarity">
    <text evidence="1">Belongs to the KdsB family.</text>
</comment>
<accession>A6L5J0</accession>
<sequence>MKFIGIIPARYASTRFPAKPLAVLGGKPVIQRVYEQVSGILDEAYVATDDERIESAVKAFGGKVVMTSVHHKSGTDRCYEAYTKVGRGYDVVVNIQGDEPFIQKSQLEAVKACFEDPATQIATLVKPFIPDDGLEALENVNSPKVVVGKNMNALYFSRSIIPFQRNVEKEGWLKGHTYYKHIGLYAYRADVLKEITSLPQSSLELAESLEQLRWLENGYTIKVGISEVETIGIDTPQDLARAEAFLKQREGE</sequence>
<name>KDSB_PHOV8</name>
<proteinExistence type="inferred from homology"/>
<dbReference type="EC" id="2.7.7.38" evidence="1"/>
<dbReference type="EMBL" id="CP000139">
    <property type="protein sequence ID" value="ABR40954.1"/>
    <property type="molecule type" value="Genomic_DNA"/>
</dbReference>
<dbReference type="RefSeq" id="WP_005842057.1">
    <property type="nucleotide sequence ID" value="NZ_CAXVNH010000009.1"/>
</dbReference>
<dbReference type="SMR" id="A6L5J0"/>
<dbReference type="STRING" id="435590.BVU_3328"/>
<dbReference type="PaxDb" id="435590-BVU_3328"/>
<dbReference type="GeneID" id="5304289"/>
<dbReference type="KEGG" id="bvu:BVU_3328"/>
<dbReference type="eggNOG" id="COG1212">
    <property type="taxonomic scope" value="Bacteria"/>
</dbReference>
<dbReference type="HOGENOM" id="CLU_065038_0_1_10"/>
<dbReference type="BioCyc" id="BVUL435590:G1G59-3450-MONOMER"/>
<dbReference type="UniPathway" id="UPA00030"/>
<dbReference type="UniPathway" id="UPA00358">
    <property type="reaction ID" value="UER00476"/>
</dbReference>
<dbReference type="Proteomes" id="UP000002861">
    <property type="component" value="Chromosome"/>
</dbReference>
<dbReference type="GO" id="GO:0005829">
    <property type="term" value="C:cytosol"/>
    <property type="evidence" value="ECO:0007669"/>
    <property type="project" value="TreeGrafter"/>
</dbReference>
<dbReference type="GO" id="GO:0008690">
    <property type="term" value="F:3-deoxy-manno-octulosonate cytidylyltransferase activity"/>
    <property type="evidence" value="ECO:0007669"/>
    <property type="project" value="UniProtKB-UniRule"/>
</dbReference>
<dbReference type="GO" id="GO:0033468">
    <property type="term" value="P:CMP-keto-3-deoxy-D-manno-octulosonic acid biosynthetic process"/>
    <property type="evidence" value="ECO:0007669"/>
    <property type="project" value="UniProtKB-UniRule"/>
</dbReference>
<dbReference type="GO" id="GO:0009103">
    <property type="term" value="P:lipopolysaccharide biosynthetic process"/>
    <property type="evidence" value="ECO:0007669"/>
    <property type="project" value="UniProtKB-UniRule"/>
</dbReference>
<dbReference type="CDD" id="cd02517">
    <property type="entry name" value="CMP-KDO-Synthetase"/>
    <property type="match status" value="1"/>
</dbReference>
<dbReference type="FunFam" id="3.90.550.10:FF:000011">
    <property type="entry name" value="3-deoxy-manno-octulosonate cytidylyltransferase"/>
    <property type="match status" value="1"/>
</dbReference>
<dbReference type="Gene3D" id="3.90.550.10">
    <property type="entry name" value="Spore Coat Polysaccharide Biosynthesis Protein SpsA, Chain A"/>
    <property type="match status" value="1"/>
</dbReference>
<dbReference type="HAMAP" id="MF_00057">
    <property type="entry name" value="KdsB"/>
    <property type="match status" value="1"/>
</dbReference>
<dbReference type="InterPro" id="IPR003329">
    <property type="entry name" value="Cytidylyl_trans"/>
</dbReference>
<dbReference type="InterPro" id="IPR004528">
    <property type="entry name" value="KdsB"/>
</dbReference>
<dbReference type="InterPro" id="IPR029044">
    <property type="entry name" value="Nucleotide-diphossugar_trans"/>
</dbReference>
<dbReference type="NCBIfam" id="TIGR00466">
    <property type="entry name" value="kdsB"/>
    <property type="match status" value="1"/>
</dbReference>
<dbReference type="NCBIfam" id="NF003950">
    <property type="entry name" value="PRK05450.1-3"/>
    <property type="match status" value="1"/>
</dbReference>
<dbReference type="NCBIfam" id="NF003952">
    <property type="entry name" value="PRK05450.1-5"/>
    <property type="match status" value="1"/>
</dbReference>
<dbReference type="NCBIfam" id="NF009905">
    <property type="entry name" value="PRK13368.1"/>
    <property type="match status" value="1"/>
</dbReference>
<dbReference type="PANTHER" id="PTHR42866">
    <property type="entry name" value="3-DEOXY-MANNO-OCTULOSONATE CYTIDYLYLTRANSFERASE"/>
    <property type="match status" value="1"/>
</dbReference>
<dbReference type="PANTHER" id="PTHR42866:SF2">
    <property type="entry name" value="3-DEOXY-MANNO-OCTULOSONATE CYTIDYLYLTRANSFERASE, MITOCHONDRIAL"/>
    <property type="match status" value="1"/>
</dbReference>
<dbReference type="Pfam" id="PF02348">
    <property type="entry name" value="CTP_transf_3"/>
    <property type="match status" value="1"/>
</dbReference>
<dbReference type="SUPFAM" id="SSF53448">
    <property type="entry name" value="Nucleotide-diphospho-sugar transferases"/>
    <property type="match status" value="1"/>
</dbReference>